<proteinExistence type="evidence at protein level"/>
<keyword id="KW-0903">Direct protein sequencing</keyword>
<feature type="chain" id="PRO_0000221510" description="Trichocyst matrix protein T4-C">
    <location>
        <begin position="1" status="less than"/>
        <end position="27" status="greater than"/>
    </location>
</feature>
<feature type="non-terminal residue">
    <location>
        <position position="1"/>
    </location>
</feature>
<feature type="non-terminal residue">
    <location>
        <position position="27"/>
    </location>
</feature>
<accession>Q27176</accession>
<dbReference type="EMBL" id="U27514">
    <property type="protein sequence ID" value="AAA92614.1"/>
    <property type="molecule type" value="Genomic_DNA"/>
</dbReference>
<dbReference type="SMR" id="Q27176"/>
<dbReference type="GO" id="GO:0055039">
    <property type="term" value="C:trichocyst"/>
    <property type="evidence" value="ECO:0007669"/>
    <property type="project" value="UniProtKB-SubCell"/>
</dbReference>
<name>T4C_PARTE</name>
<organism>
    <name type="scientific">Paramecium tetraurelia</name>
    <dbReference type="NCBI Taxonomy" id="5888"/>
    <lineage>
        <taxon>Eukaryota</taxon>
        <taxon>Sar</taxon>
        <taxon>Alveolata</taxon>
        <taxon>Ciliophora</taxon>
        <taxon>Intramacronucleata</taxon>
        <taxon>Oligohymenophorea</taxon>
        <taxon>Peniculida</taxon>
        <taxon>Parameciidae</taxon>
        <taxon>Paramecium</taxon>
    </lineage>
</organism>
<reference key="1">
    <citation type="journal article" date="1995" name="Mol. Biol. Cell">
        <title>A large multigene family codes for the polypeptides of the crystalline trichocyst matrix in Paramecium.</title>
        <authorList>
            <person name="Madeddu L."/>
            <person name="Gautier M.-C."/>
            <person name="Vayssie L."/>
            <person name="Houari A."/>
            <person name="Sperling L."/>
        </authorList>
    </citation>
    <scope>NUCLEOTIDE SEQUENCE [GENOMIC DNA]</scope>
    <source>
        <strain>Stock d4-2</strain>
    </source>
</reference>
<reference key="2">
    <citation type="journal article" date="1994" name="Biochimie">
        <title>Protein processing and morphogenesis of secretory granules in Paramecium.</title>
        <authorList>
            <person name="Madeddu L."/>
            <person name="Gautier M.-C."/>
            <person name="le Caer J.-P."/>
            <person name="de Loubresse N."/>
            <person name="Sperling L."/>
        </authorList>
    </citation>
    <scope>PARTIAL PROTEIN SEQUENCE</scope>
    <source>
        <strain>Stock d4-2</strain>
    </source>
</reference>
<evidence type="ECO:0000305" key="1"/>
<sequence>GAVGEIQILLNNIASQLNGDQKKADKV</sequence>
<comment type="function">
    <text>Structural protein that crystallize inside the trichocyst matrix.</text>
</comment>
<comment type="subcellular location">
    <subcellularLocation>
        <location>Trichocyst</location>
    </subcellularLocation>
    <text>These are architecturally complex secretory storage granules-docked at the plasma membrane, ready to rapidly respond to an exocytotic stimulus.</text>
</comment>
<comment type="similarity">
    <text evidence="1">Belongs to the TMP family.</text>
</comment>
<comment type="online information" name="Protein Spotlight">
    <link uri="https://www.proteinspotlight.org/back_issues/003"/>
    <text>The arsenal of Paramecium - Issue 3 of October 2000</text>
</comment>
<gene>
    <name type="primary">T4C</name>
</gene>
<protein>
    <recommendedName>
        <fullName>Trichocyst matrix protein T4-C</fullName>
    </recommendedName>
    <alternativeName>
        <fullName>Secretory granule protein T4-C</fullName>
    </alternativeName>
    <alternativeName>
        <fullName>TMP 4-C</fullName>
    </alternativeName>
</protein>